<organism>
    <name type="scientific">Arabidopsis thaliana</name>
    <name type="common">Mouse-ear cress</name>
    <dbReference type="NCBI Taxonomy" id="3702"/>
    <lineage>
        <taxon>Eukaryota</taxon>
        <taxon>Viridiplantae</taxon>
        <taxon>Streptophyta</taxon>
        <taxon>Embryophyta</taxon>
        <taxon>Tracheophyta</taxon>
        <taxon>Spermatophyta</taxon>
        <taxon>Magnoliopsida</taxon>
        <taxon>eudicotyledons</taxon>
        <taxon>Gunneridae</taxon>
        <taxon>Pentapetalae</taxon>
        <taxon>rosids</taxon>
        <taxon>malvids</taxon>
        <taxon>Brassicales</taxon>
        <taxon>Brassicaceae</taxon>
        <taxon>Camelineae</taxon>
        <taxon>Arabidopsis</taxon>
    </lineage>
</organism>
<protein>
    <recommendedName>
        <fullName evidence="10">Galactolipase DONGLE, chloroplastic</fullName>
        <ecNumber evidence="5">3.1.1.26</ecNumber>
        <ecNumber evidence="5">3.1.1.32</ecNumber>
    </recommendedName>
    <alternativeName>
        <fullName evidence="9">Phospholipase A1 DONGLE</fullName>
    </alternativeName>
    <alternativeName>
        <fullName evidence="8">Phospholipase A1-Ialpha1</fullName>
    </alternativeName>
</protein>
<evidence type="ECO:0000250" key="1">
    <source>
        <dbReference type="UniProtKB" id="Q948R1"/>
    </source>
</evidence>
<evidence type="ECO:0000255" key="2"/>
<evidence type="ECO:0000256" key="3">
    <source>
        <dbReference type="SAM" id="MobiDB-lite"/>
    </source>
</evidence>
<evidence type="ECO:0000269" key="4">
    <source>
    </source>
</evidence>
<evidence type="ECO:0000269" key="5">
    <source>
    </source>
</evidence>
<evidence type="ECO:0000269" key="6">
    <source>
    </source>
</evidence>
<evidence type="ECO:0000269" key="7">
    <source>
    </source>
</evidence>
<evidence type="ECO:0000303" key="8">
    <source>
    </source>
</evidence>
<evidence type="ECO:0000303" key="9">
    <source>
    </source>
</evidence>
<evidence type="ECO:0000305" key="10"/>
<evidence type="ECO:0000312" key="11">
    <source>
        <dbReference type="Araport" id="AT1G05800"/>
    </source>
</evidence>
<evidence type="ECO:0000312" key="12">
    <source>
        <dbReference type="EMBL" id="AAF29385.1"/>
    </source>
</evidence>
<sequence>MAAKVFTQNPIYSQSLVRDKTPQQKHNLDHFSISQHTSKRLVVSSSTMSPPISSSPLSLPSSSSSQAIPPSRAPAVTLPLSRVWREIQGSNNWENLIEPLSPILQQEITRYGNLLSASYKGFDLNPNSKRYLSCKYGKKNLLKESGIHDPDGYQVTKYIYATPDINLNPIKNEPNRARWIGYVAVSSDESVKRLGRRDILVTFRGTVTNHEWLANLKSSLTPARLDPHNPRPDVKVESGFLGLYTSGESESKFGLESCREQLLSEISRLMNKHKGEEISITLAGHSMGSSLAQLLAYDIAELGMNQRRDEKPVPVTVFSFAGPRVGNLGFKKRCEELGVKVLRITNVNDPITKLPGFLFNENFRSLGGVYELPWSCSCYTHVGVELTLDFFDVQNISCVHDLETYITLVNRPRCSKLAVNEDNFGGEFLNRTSELMFSKGRRQALHFTNAATNAAYLLCSISNHMLYYNIF</sequence>
<keyword id="KW-0150">Chloroplast</keyword>
<keyword id="KW-0378">Hydrolase</keyword>
<keyword id="KW-0442">Lipid degradation</keyword>
<keyword id="KW-0443">Lipid metabolism</keyword>
<keyword id="KW-0934">Plastid</keyword>
<keyword id="KW-1185">Reference proteome</keyword>
<keyword id="KW-0809">Transit peptide</keyword>
<gene>
    <name evidence="9" type="primary">DGL</name>
    <name evidence="11" type="ordered locus">At1g05800</name>
    <name evidence="12" type="ORF">T20M3.6</name>
</gene>
<name>PLA12_ARATH</name>
<feature type="transit peptide" description="Chloroplast" evidence="2">
    <location>
        <begin position="1"/>
        <end position="88"/>
    </location>
</feature>
<feature type="chain" id="PRO_0000398876" description="Galactolipase DONGLE, chloroplastic">
    <location>
        <begin position="89"/>
        <end position="471"/>
    </location>
</feature>
<feature type="region of interest" description="Disordered" evidence="3">
    <location>
        <begin position="44"/>
        <end position="71"/>
    </location>
</feature>
<feature type="short sequence motif" description="GXSXG" evidence="1">
    <location>
        <begin position="284"/>
        <end position="288"/>
    </location>
</feature>
<feature type="active site" description="Acyl-ester intermediate" evidence="1">
    <location>
        <position position="286"/>
    </location>
</feature>
<feature type="active site" description="Charge relay system" evidence="1">
    <location>
        <position position="349"/>
    </location>
</feature>
<feature type="active site" description="Charge relay system" evidence="1">
    <location>
        <position position="400"/>
    </location>
</feature>
<dbReference type="EC" id="3.1.1.26" evidence="5"/>
<dbReference type="EC" id="3.1.1.32" evidence="5"/>
<dbReference type="EMBL" id="EU411040">
    <property type="protein sequence ID" value="ACA48222.1"/>
    <property type="molecule type" value="Genomic_DNA"/>
</dbReference>
<dbReference type="EMBL" id="AC009999">
    <property type="protein sequence ID" value="AAF29385.1"/>
    <property type="molecule type" value="Genomic_DNA"/>
</dbReference>
<dbReference type="EMBL" id="CP002684">
    <property type="protein sequence ID" value="AEE27895.1"/>
    <property type="molecule type" value="Genomic_DNA"/>
</dbReference>
<dbReference type="PIR" id="E86192">
    <property type="entry name" value="E86192"/>
</dbReference>
<dbReference type="RefSeq" id="NP_563748.1">
    <property type="nucleotide sequence ID" value="NM_100460.1"/>
</dbReference>
<dbReference type="SMR" id="Q9MA46"/>
<dbReference type="FunCoup" id="Q9MA46">
    <property type="interactions" value="60"/>
</dbReference>
<dbReference type="STRING" id="3702.Q9MA46"/>
<dbReference type="SwissLipids" id="SLP:000001923"/>
<dbReference type="ESTHER" id="arath-PLA12">
    <property type="family name" value="Plant_phospholipase"/>
</dbReference>
<dbReference type="PaxDb" id="3702-AT1G05800.1"/>
<dbReference type="EnsemblPlants" id="AT1G05800.1">
    <property type="protein sequence ID" value="AT1G05800.1"/>
    <property type="gene ID" value="AT1G05800"/>
</dbReference>
<dbReference type="GeneID" id="837089"/>
<dbReference type="Gramene" id="AT1G05800.1">
    <property type="protein sequence ID" value="AT1G05800.1"/>
    <property type="gene ID" value="AT1G05800"/>
</dbReference>
<dbReference type="KEGG" id="ath:AT1G05800"/>
<dbReference type="Araport" id="AT1G05800"/>
<dbReference type="TAIR" id="AT1G05800">
    <property type="gene designation" value="DGL"/>
</dbReference>
<dbReference type="eggNOG" id="KOG4569">
    <property type="taxonomic scope" value="Eukaryota"/>
</dbReference>
<dbReference type="HOGENOM" id="CLU_018841_2_0_1"/>
<dbReference type="InParanoid" id="Q9MA46"/>
<dbReference type="OMA" id="KWIGYIA"/>
<dbReference type="PhylomeDB" id="Q9MA46"/>
<dbReference type="BioCyc" id="ARA:AT1G05800-MONOMER"/>
<dbReference type="PRO" id="PR:Q9MA46"/>
<dbReference type="Proteomes" id="UP000006548">
    <property type="component" value="Chromosome 1"/>
</dbReference>
<dbReference type="ExpressionAtlas" id="Q9MA46">
    <property type="expression patterns" value="baseline and differential"/>
</dbReference>
<dbReference type="GO" id="GO:0009507">
    <property type="term" value="C:chloroplast"/>
    <property type="evidence" value="ECO:0000314"/>
    <property type="project" value="TAIR"/>
</dbReference>
<dbReference type="GO" id="GO:0005811">
    <property type="term" value="C:lipid droplet"/>
    <property type="evidence" value="ECO:0000314"/>
    <property type="project" value="TAIR"/>
</dbReference>
<dbReference type="GO" id="GO:0047714">
    <property type="term" value="F:galactolipase activity"/>
    <property type="evidence" value="ECO:0000314"/>
    <property type="project" value="TAIR"/>
</dbReference>
<dbReference type="GO" id="GO:0008970">
    <property type="term" value="F:phospholipase A1 activity"/>
    <property type="evidence" value="ECO:0000314"/>
    <property type="project" value="TAIR"/>
</dbReference>
<dbReference type="GO" id="GO:0050832">
    <property type="term" value="P:defense response to fungus"/>
    <property type="evidence" value="ECO:0000315"/>
    <property type="project" value="TAIR"/>
</dbReference>
<dbReference type="GO" id="GO:0009695">
    <property type="term" value="P:jasmonic acid biosynthetic process"/>
    <property type="evidence" value="ECO:0000315"/>
    <property type="project" value="TAIR"/>
</dbReference>
<dbReference type="GO" id="GO:0016042">
    <property type="term" value="P:lipid catabolic process"/>
    <property type="evidence" value="ECO:0007669"/>
    <property type="project" value="UniProtKB-KW"/>
</dbReference>
<dbReference type="GO" id="GO:0030308">
    <property type="term" value="P:negative regulation of cell growth"/>
    <property type="evidence" value="ECO:0000315"/>
    <property type="project" value="TAIR"/>
</dbReference>
<dbReference type="GO" id="GO:0009611">
    <property type="term" value="P:response to wounding"/>
    <property type="evidence" value="ECO:0000270"/>
    <property type="project" value="TAIR"/>
</dbReference>
<dbReference type="CDD" id="cd00519">
    <property type="entry name" value="Lipase_3"/>
    <property type="match status" value="1"/>
</dbReference>
<dbReference type="FunFam" id="3.40.50.1820:FF:000106">
    <property type="entry name" value="Galactolipase DONGLE, chloroplastic"/>
    <property type="match status" value="1"/>
</dbReference>
<dbReference type="Gene3D" id="3.40.50.1820">
    <property type="entry name" value="alpha/beta hydrolase"/>
    <property type="match status" value="1"/>
</dbReference>
<dbReference type="InterPro" id="IPR029058">
    <property type="entry name" value="AB_hydrolase_fold"/>
</dbReference>
<dbReference type="InterPro" id="IPR002921">
    <property type="entry name" value="Fungal_lipase-type"/>
</dbReference>
<dbReference type="PANTHER" id="PTHR31403:SF56">
    <property type="entry name" value="GALACTOLIPASE DONGLE, CHLOROPLASTIC"/>
    <property type="match status" value="1"/>
</dbReference>
<dbReference type="PANTHER" id="PTHR31403">
    <property type="entry name" value="PHOSPHOLIPASE A1-IBETA2, CHLOROPLASTIC"/>
    <property type="match status" value="1"/>
</dbReference>
<dbReference type="Pfam" id="PF01764">
    <property type="entry name" value="Lipase_3"/>
    <property type="match status" value="1"/>
</dbReference>
<dbReference type="SUPFAM" id="SSF53474">
    <property type="entry name" value="alpha/beta-Hydrolases"/>
    <property type="match status" value="1"/>
</dbReference>
<reference key="1">
    <citation type="journal article" date="2008" name="Dev. Cell">
        <title>Cooperation and functional diversification of two closely related galactolipase genes for jasmonate biosynthesis.</title>
        <authorList>
            <person name="Hyun Y."/>
            <person name="Choi S."/>
            <person name="Hwang H.J."/>
            <person name="Yu J."/>
            <person name="Nam S.J."/>
            <person name="Ko J."/>
            <person name="Park J.Y."/>
            <person name="Seo Y.S."/>
            <person name="Kim E.Y."/>
            <person name="Ryu S.B."/>
            <person name="Kim W.T."/>
            <person name="Lee Y.H."/>
            <person name="Kang H."/>
            <person name="Lee I."/>
        </authorList>
    </citation>
    <scope>NUCLEOTIDE SEQUENCE [GENOMIC DNA]</scope>
    <scope>FUNCTION</scope>
    <scope>SUBCELLULAR LOCATION</scope>
    <scope>TISSUE SPECIFICITY</scope>
    <scope>INDUCTION BY WOUNDING</scope>
    <scope>BIOPHYSICOCHEMICAL PROPERTIES</scope>
</reference>
<reference key="2">
    <citation type="journal article" date="2000" name="Nature">
        <title>Sequence and analysis of chromosome 1 of the plant Arabidopsis thaliana.</title>
        <authorList>
            <person name="Theologis A."/>
            <person name="Ecker J.R."/>
            <person name="Palm C.J."/>
            <person name="Federspiel N.A."/>
            <person name="Kaul S."/>
            <person name="White O."/>
            <person name="Alonso J."/>
            <person name="Altafi H."/>
            <person name="Araujo R."/>
            <person name="Bowman C.L."/>
            <person name="Brooks S.Y."/>
            <person name="Buehler E."/>
            <person name="Chan A."/>
            <person name="Chao Q."/>
            <person name="Chen H."/>
            <person name="Cheuk R.F."/>
            <person name="Chin C.W."/>
            <person name="Chung M.K."/>
            <person name="Conn L."/>
            <person name="Conway A.B."/>
            <person name="Conway A.R."/>
            <person name="Creasy T.H."/>
            <person name="Dewar K."/>
            <person name="Dunn P."/>
            <person name="Etgu P."/>
            <person name="Feldblyum T.V."/>
            <person name="Feng J.-D."/>
            <person name="Fong B."/>
            <person name="Fujii C.Y."/>
            <person name="Gill J.E."/>
            <person name="Goldsmith A.D."/>
            <person name="Haas B."/>
            <person name="Hansen N.F."/>
            <person name="Hughes B."/>
            <person name="Huizar L."/>
            <person name="Hunter J.L."/>
            <person name="Jenkins J."/>
            <person name="Johnson-Hopson C."/>
            <person name="Khan S."/>
            <person name="Khaykin E."/>
            <person name="Kim C.J."/>
            <person name="Koo H.L."/>
            <person name="Kremenetskaia I."/>
            <person name="Kurtz D.B."/>
            <person name="Kwan A."/>
            <person name="Lam B."/>
            <person name="Langin-Hooper S."/>
            <person name="Lee A."/>
            <person name="Lee J.M."/>
            <person name="Lenz C.A."/>
            <person name="Li J.H."/>
            <person name="Li Y.-P."/>
            <person name="Lin X."/>
            <person name="Liu S.X."/>
            <person name="Liu Z.A."/>
            <person name="Luros J.S."/>
            <person name="Maiti R."/>
            <person name="Marziali A."/>
            <person name="Militscher J."/>
            <person name="Miranda M."/>
            <person name="Nguyen M."/>
            <person name="Nierman W.C."/>
            <person name="Osborne B.I."/>
            <person name="Pai G."/>
            <person name="Peterson J."/>
            <person name="Pham P.K."/>
            <person name="Rizzo M."/>
            <person name="Rooney T."/>
            <person name="Rowley D."/>
            <person name="Sakano H."/>
            <person name="Salzberg S.L."/>
            <person name="Schwartz J.R."/>
            <person name="Shinn P."/>
            <person name="Southwick A.M."/>
            <person name="Sun H."/>
            <person name="Tallon L.J."/>
            <person name="Tambunga G."/>
            <person name="Toriumi M.J."/>
            <person name="Town C.D."/>
            <person name="Utterback T."/>
            <person name="Van Aken S."/>
            <person name="Vaysberg M."/>
            <person name="Vysotskaia V.S."/>
            <person name="Walker M."/>
            <person name="Wu D."/>
            <person name="Yu G."/>
            <person name="Fraser C.M."/>
            <person name="Venter J.C."/>
            <person name="Davis R.W."/>
        </authorList>
    </citation>
    <scope>NUCLEOTIDE SEQUENCE [LARGE SCALE GENOMIC DNA]</scope>
    <source>
        <strain>cv. Columbia</strain>
    </source>
</reference>
<reference key="3">
    <citation type="journal article" date="2017" name="Plant J.">
        <title>Araport11: a complete reannotation of the Arabidopsis thaliana reference genome.</title>
        <authorList>
            <person name="Cheng C.Y."/>
            <person name="Krishnakumar V."/>
            <person name="Chan A.P."/>
            <person name="Thibaud-Nissen F."/>
            <person name="Schobel S."/>
            <person name="Town C.D."/>
        </authorList>
    </citation>
    <scope>GENOME REANNOTATION</scope>
    <source>
        <strain>cv. Columbia</strain>
    </source>
</reference>
<reference key="4">
    <citation type="journal article" date="2004" name="Trends Plant Sci.">
        <title>Phospholipid-derived signaling mediated by phospholipase A in plants.</title>
        <authorList>
            <person name="Ryu S.B."/>
        </authorList>
    </citation>
    <scope>GENE FAMILY</scope>
    <scope>NOMENCLATURE</scope>
</reference>
<reference key="5">
    <citation type="journal article" date="2009" name="FEBS Lett.">
        <title>Enzymatic characterization of class I DAD1-like acylhydrolase members targeted to chloroplast in Arabidopsis.</title>
        <authorList>
            <person name="Seo Y.S."/>
            <person name="Kim E.Y."/>
            <person name="Kim J.H."/>
            <person name="Kim W.T."/>
        </authorList>
    </citation>
    <scope>CATALYTIC ACTIVITY</scope>
    <scope>SUBCELLULAR LOCATION</scope>
    <scope>TISSUE SPECIFICITY</scope>
</reference>
<reference key="6">
    <citation type="journal article" date="2010" name="Plant Physiol.">
        <title>DONGLE and DEFECTIVE IN ANTHER DEHISCENCE1 lipases are not essential for wound- and pathogen-induced jasmonate biosynthesis: redundant lipases contribute to jasmonate formation.</title>
        <authorList>
            <person name="Ellinger D."/>
            <person name="Stingl N."/>
            <person name="Kubigsteltig I.I."/>
            <person name="Bals T."/>
            <person name="Juenger M."/>
            <person name="Pollmann S."/>
            <person name="Berger S."/>
            <person name="Schuenemann D."/>
            <person name="Mueller M.J."/>
        </authorList>
    </citation>
    <scope>FUNCTION</scope>
    <scope>SUBCELLULAR LOCATION</scope>
    <scope>INDUCTION BY WOUNDING</scope>
    <scope>DISRUPTION PHENOTYPE</scope>
</reference>
<reference key="7">
    <citation type="journal article" date="2014" name="Plant Cell Rep.">
        <title>Wound-induced expression of DEFECTIVE IN ANTHER DEHISCENCE1 and DAD1-like lipase genes is mediated by both CORONATINE INSENSITIVE1-dependent and independent pathways in Arabidopsis thaliana.</title>
        <authorList>
            <person name="Rudus I."/>
            <person name="Terai H."/>
            <person name="Shimizu T."/>
            <person name="Kojima H."/>
            <person name="Hattori K."/>
            <person name="Nishimori Y."/>
            <person name="Tsukagoshi H."/>
            <person name="Kamiya Y."/>
            <person name="Seo M."/>
            <person name="Nakamura K."/>
            <person name="Kepczynski J."/>
            <person name="Ishiguro S."/>
        </authorList>
    </citation>
    <scope>INDUCTION</scope>
</reference>
<proteinExistence type="evidence at protein level"/>
<accession>Q9MA46</accession>
<comment type="function">
    <text evidence="4 6">Sn-1-specific phospholipase that releases free fatty acids from phosphatidylcholine. Has a higher galactolipase activity than phospholipase A1 activity when digalactosyldiacylglycerol (DGDG) is used as substrate. Catalyzes the initial step of jasmonic acid biosynthesis. Required for the biosynthesis of basal-level endogenous jasmonate in vegetative tissues. Regulates leaves growth. Not essential for jasmonate biosynthesis after wounding or upon pathogen infection.</text>
</comment>
<comment type="catalytic activity">
    <reaction evidence="5">
        <text>a 1,2-diacyl-3-O-(beta-D-galactosyl)-sn-glycerol + 2 H2O = 3-beta-D-galactosyl-sn-glycerol + 2 a fatty acid + 2 H(+)</text>
        <dbReference type="Rhea" id="RHEA:13189"/>
        <dbReference type="ChEBI" id="CHEBI:15377"/>
        <dbReference type="ChEBI" id="CHEBI:15378"/>
        <dbReference type="ChEBI" id="CHEBI:15754"/>
        <dbReference type="ChEBI" id="CHEBI:17615"/>
        <dbReference type="ChEBI" id="CHEBI:28868"/>
        <dbReference type="EC" id="3.1.1.26"/>
    </reaction>
    <physiologicalReaction direction="left-to-right" evidence="5">
        <dbReference type="Rhea" id="RHEA:13190"/>
    </physiologicalReaction>
</comment>
<comment type="catalytic activity">
    <reaction evidence="5">
        <text>a 1,2-diacyl-sn-glycero-3-phosphocholine + H2O = a 2-acyl-sn-glycero-3-phosphocholine + a fatty acid + H(+)</text>
        <dbReference type="Rhea" id="RHEA:18689"/>
        <dbReference type="ChEBI" id="CHEBI:15377"/>
        <dbReference type="ChEBI" id="CHEBI:15378"/>
        <dbReference type="ChEBI" id="CHEBI:28868"/>
        <dbReference type="ChEBI" id="CHEBI:57643"/>
        <dbReference type="ChEBI" id="CHEBI:57875"/>
        <dbReference type="EC" id="3.1.1.32"/>
    </reaction>
    <physiologicalReaction direction="left-to-right" evidence="5">
        <dbReference type="Rhea" id="RHEA:18690"/>
    </physiologicalReaction>
</comment>
<comment type="catalytic activity">
    <reaction evidence="5">
        <text>a 1,2-diacyl-3-O-[alpha-D-galactosyl-(1-&gt;6)-beta-D-galactosyl]-sn-glycerol + H2O = acyl-3-O-[alpha-D-galactosyl-(1-&gt;6)-beta-D-galactosyl]-sn-glycerol + a fatty acid + H(+)</text>
        <dbReference type="Rhea" id="RHEA:48372"/>
        <dbReference type="ChEBI" id="CHEBI:15377"/>
        <dbReference type="ChEBI" id="CHEBI:15378"/>
        <dbReference type="ChEBI" id="CHEBI:28396"/>
        <dbReference type="ChEBI" id="CHEBI:28868"/>
        <dbReference type="ChEBI" id="CHEBI:90310"/>
    </reaction>
    <physiologicalReaction direction="left-to-right" evidence="5">
        <dbReference type="Rhea" id="RHEA:48373"/>
    </physiologicalReaction>
</comment>
<comment type="biophysicochemical properties">
    <phDependence>
        <text evidence="4">Optimum pH is 7.0.</text>
    </phDependence>
</comment>
<comment type="subcellular location">
    <subcellularLocation>
        <location evidence="4 5 6">Plastid</location>
        <location evidence="4 5 6">Chloroplast</location>
    </subcellularLocation>
    <text>PubMed:20348210 shows a localization in lipid droplets.</text>
</comment>
<comment type="tissue specificity">
    <text evidence="4 5">Expressed in leaves and seedlings. Not detected in flowers, siliques or roots.</text>
</comment>
<comment type="induction">
    <text evidence="4 6 7">Induced by wounding (PubMed:18267087, PubMed:20348210, PubMed:24430866). Induced by methyl jasmonate (PubMed:24430866).</text>
</comment>
<comment type="disruption phenotype">
    <text evidence="6">No visible phenotype under standard growth phenotype.</text>
</comment>
<comment type="miscellaneous">
    <text evidence="4">Overexpression of DGL causes a dwarf phenotype.</text>
</comment>
<comment type="similarity">
    <text evidence="10">Belongs to the AB hydrolase superfamily. Lipase family.</text>
</comment>